<organism>
    <name type="scientific">Ehrlichia canis (strain Jake)</name>
    <dbReference type="NCBI Taxonomy" id="269484"/>
    <lineage>
        <taxon>Bacteria</taxon>
        <taxon>Pseudomonadati</taxon>
        <taxon>Pseudomonadota</taxon>
        <taxon>Alphaproteobacteria</taxon>
        <taxon>Rickettsiales</taxon>
        <taxon>Anaplasmataceae</taxon>
        <taxon>Ehrlichia</taxon>
    </lineage>
</organism>
<accession>Q3YST8</accession>
<name>RL1_EHRCJ</name>
<proteinExistence type="inferred from homology"/>
<dbReference type="EMBL" id="CP000107">
    <property type="protein sequence ID" value="AAZ68217.1"/>
    <property type="molecule type" value="Genomic_DNA"/>
</dbReference>
<dbReference type="RefSeq" id="WP_011304295.1">
    <property type="nucleotide sequence ID" value="NC_007354.1"/>
</dbReference>
<dbReference type="SMR" id="Q3YST8"/>
<dbReference type="FunCoup" id="Q3YST8">
    <property type="interactions" value="352"/>
</dbReference>
<dbReference type="STRING" id="269484.Ecaj_0166"/>
<dbReference type="KEGG" id="ecn:Ecaj_0166"/>
<dbReference type="eggNOG" id="COG0081">
    <property type="taxonomic scope" value="Bacteria"/>
</dbReference>
<dbReference type="HOGENOM" id="CLU_062853_0_0_5"/>
<dbReference type="InParanoid" id="Q3YST8"/>
<dbReference type="Proteomes" id="UP000000435">
    <property type="component" value="Chromosome"/>
</dbReference>
<dbReference type="GO" id="GO:0015934">
    <property type="term" value="C:large ribosomal subunit"/>
    <property type="evidence" value="ECO:0007669"/>
    <property type="project" value="InterPro"/>
</dbReference>
<dbReference type="GO" id="GO:0019843">
    <property type="term" value="F:rRNA binding"/>
    <property type="evidence" value="ECO:0007669"/>
    <property type="project" value="UniProtKB-UniRule"/>
</dbReference>
<dbReference type="GO" id="GO:0003735">
    <property type="term" value="F:structural constituent of ribosome"/>
    <property type="evidence" value="ECO:0007669"/>
    <property type="project" value="InterPro"/>
</dbReference>
<dbReference type="GO" id="GO:0000049">
    <property type="term" value="F:tRNA binding"/>
    <property type="evidence" value="ECO:0007669"/>
    <property type="project" value="UniProtKB-KW"/>
</dbReference>
<dbReference type="GO" id="GO:0006417">
    <property type="term" value="P:regulation of translation"/>
    <property type="evidence" value="ECO:0007669"/>
    <property type="project" value="UniProtKB-KW"/>
</dbReference>
<dbReference type="GO" id="GO:0006412">
    <property type="term" value="P:translation"/>
    <property type="evidence" value="ECO:0007669"/>
    <property type="project" value="UniProtKB-UniRule"/>
</dbReference>
<dbReference type="CDD" id="cd00403">
    <property type="entry name" value="Ribosomal_L1"/>
    <property type="match status" value="1"/>
</dbReference>
<dbReference type="FunFam" id="3.40.50.790:FF:000001">
    <property type="entry name" value="50S ribosomal protein L1"/>
    <property type="match status" value="1"/>
</dbReference>
<dbReference type="Gene3D" id="3.30.190.20">
    <property type="match status" value="1"/>
</dbReference>
<dbReference type="Gene3D" id="3.40.50.790">
    <property type="match status" value="1"/>
</dbReference>
<dbReference type="HAMAP" id="MF_01318_B">
    <property type="entry name" value="Ribosomal_uL1_B"/>
    <property type="match status" value="1"/>
</dbReference>
<dbReference type="InterPro" id="IPR005878">
    <property type="entry name" value="Ribosom_uL1_bac-type"/>
</dbReference>
<dbReference type="InterPro" id="IPR002143">
    <property type="entry name" value="Ribosomal_uL1"/>
</dbReference>
<dbReference type="InterPro" id="IPR023674">
    <property type="entry name" value="Ribosomal_uL1-like"/>
</dbReference>
<dbReference type="InterPro" id="IPR028364">
    <property type="entry name" value="Ribosomal_uL1/biogenesis"/>
</dbReference>
<dbReference type="InterPro" id="IPR016095">
    <property type="entry name" value="Ribosomal_uL1_3-a/b-sand"/>
</dbReference>
<dbReference type="InterPro" id="IPR023673">
    <property type="entry name" value="Ribosomal_uL1_CS"/>
</dbReference>
<dbReference type="NCBIfam" id="TIGR01169">
    <property type="entry name" value="rplA_bact"/>
    <property type="match status" value="1"/>
</dbReference>
<dbReference type="PANTHER" id="PTHR36427">
    <property type="entry name" value="54S RIBOSOMAL PROTEIN L1, MITOCHONDRIAL"/>
    <property type="match status" value="1"/>
</dbReference>
<dbReference type="PANTHER" id="PTHR36427:SF3">
    <property type="entry name" value="LARGE RIBOSOMAL SUBUNIT PROTEIN UL1M"/>
    <property type="match status" value="1"/>
</dbReference>
<dbReference type="Pfam" id="PF00687">
    <property type="entry name" value="Ribosomal_L1"/>
    <property type="match status" value="1"/>
</dbReference>
<dbReference type="PIRSF" id="PIRSF002155">
    <property type="entry name" value="Ribosomal_L1"/>
    <property type="match status" value="1"/>
</dbReference>
<dbReference type="SUPFAM" id="SSF56808">
    <property type="entry name" value="Ribosomal protein L1"/>
    <property type="match status" value="1"/>
</dbReference>
<dbReference type="PROSITE" id="PS01199">
    <property type="entry name" value="RIBOSOMAL_L1"/>
    <property type="match status" value="1"/>
</dbReference>
<feature type="chain" id="PRO_0000307651" description="Large ribosomal subunit protein uL1">
    <location>
        <begin position="1"/>
        <end position="220"/>
    </location>
</feature>
<protein>
    <recommendedName>
        <fullName evidence="1">Large ribosomal subunit protein uL1</fullName>
    </recommendedName>
    <alternativeName>
        <fullName evidence="2">50S ribosomal protein L1</fullName>
    </alternativeName>
</protein>
<reference key="1">
    <citation type="journal article" date="2006" name="J. Bacteriol.">
        <title>The genome of the obligately intracellular bacterium Ehrlichia canis reveals themes of complex membrane structure and immune evasion strategies.</title>
        <authorList>
            <person name="Mavromatis K."/>
            <person name="Doyle C.K."/>
            <person name="Lykidis A."/>
            <person name="Ivanova N."/>
            <person name="Francino M.P."/>
            <person name="Chain P."/>
            <person name="Shin M."/>
            <person name="Malfatti S."/>
            <person name="Larimer F."/>
            <person name="Copeland A."/>
            <person name="Detter J.C."/>
            <person name="Land M."/>
            <person name="Richardson P.M."/>
            <person name="Yu X.J."/>
            <person name="Walker D.H."/>
            <person name="McBride J.W."/>
            <person name="Kyrpides N.C."/>
        </authorList>
    </citation>
    <scope>NUCLEOTIDE SEQUENCE [LARGE SCALE GENOMIC DNA]</scope>
    <source>
        <strain>Jake</strain>
    </source>
</reference>
<gene>
    <name evidence="1" type="primary">rplA</name>
    <name type="ordered locus">Ecaj_0166</name>
</gene>
<keyword id="KW-0678">Repressor</keyword>
<keyword id="KW-0687">Ribonucleoprotein</keyword>
<keyword id="KW-0689">Ribosomal protein</keyword>
<keyword id="KW-0694">RNA-binding</keyword>
<keyword id="KW-0699">rRNA-binding</keyword>
<keyword id="KW-0810">Translation regulation</keyword>
<keyword id="KW-0820">tRNA-binding</keyword>
<evidence type="ECO:0000255" key="1">
    <source>
        <dbReference type="HAMAP-Rule" id="MF_01318"/>
    </source>
</evidence>
<evidence type="ECO:0000305" key="2"/>
<comment type="function">
    <text evidence="1">Binds directly to 23S rRNA. The L1 stalk is quite mobile in the ribosome, and is involved in E site tRNA release.</text>
</comment>
<comment type="function">
    <text evidence="1">Protein L1 is also a translational repressor protein, it controls the translation of the L11 operon by binding to its mRNA.</text>
</comment>
<comment type="subunit">
    <text evidence="1">Part of the 50S ribosomal subunit.</text>
</comment>
<comment type="similarity">
    <text evidence="1">Belongs to the universal ribosomal protein uL1 family.</text>
</comment>
<sequence length="220" mass="24067">MSSLVSNEVYDVESGLRKVIESAKANFCESVDVAINLNINSSKSDEQVRGCVVLPKGLGREVRVAVFAKGGHLEMAREAMANIVGDEELIEEVKKKQCKLDVDWCLTTPDFMASVSSIAKILGPKGLMPNPKFNTVTFELAKAIKIIKSGQIRFKSDKTGIVHAKIGNVKFSIEDLLENFNAVINAVKQCKPASIKGLYFKDVFVISTMGKSVKVENLNN</sequence>